<gene>
    <name type="ORF">A52R</name>
</gene>
<organismHost>
    <name type="scientific">Homo sapiens</name>
    <name type="common">Human</name>
    <dbReference type="NCBI Taxonomy" id="9606"/>
</organismHost>
<feature type="chain" id="PRO_0000099349" description="Protein A52">
    <location>
        <begin position="1"/>
        <end position="190"/>
    </location>
</feature>
<name>A52_VACCC</name>
<evidence type="ECO:0000250" key="1"/>
<evidence type="ECO:0000305" key="2"/>
<reference key="1">
    <citation type="journal article" date="1990" name="Virology">
        <title>The complete DNA sequence of vaccinia virus.</title>
        <authorList>
            <person name="Goebel S.J."/>
            <person name="Johnson G.P."/>
            <person name="Perkus M.E."/>
            <person name="Davis S.W."/>
            <person name="Winslow J.P."/>
            <person name="Paoletti E."/>
        </authorList>
    </citation>
    <scope>NUCLEOTIDE SEQUENCE [LARGE SCALE GENOMIC DNA]</scope>
</reference>
<reference key="2">
    <citation type="journal article" date="1990" name="Virology">
        <title>Appendix to 'The complete DNA sequence of vaccinia virus'.</title>
        <authorList>
            <person name="Goebel S.J."/>
            <person name="Johnson G.P."/>
            <person name="Perkus M.E."/>
            <person name="Davis S.W."/>
            <person name="Winslow J.P."/>
            <person name="Paoletti E."/>
        </authorList>
    </citation>
    <scope>NUCLEOTIDE SEQUENCE [LARGE SCALE GENOMIC DNA]</scope>
</reference>
<comment type="function">
    <text evidence="1">Bcl-2-like protein which targets host toll-like receptor signaling complexes to suppress innate immune response. Interacts with host TRAF6 to activate p38 and subsequently induce the expression of several cytokines such as IL-10. Also associates with host IRAK2 to inhibit NF-kappa-B signaling (By similarity).</text>
</comment>
<comment type="subunit">
    <text evidence="1">Interacts with host TRAF6 and IRAK2.</text>
</comment>
<comment type="similarity">
    <text evidence="2">Belongs to the orthopoxvirus A52R protein family.</text>
</comment>
<keyword id="KW-0945">Host-virus interaction</keyword>
<keyword id="KW-1090">Inhibition of host innate immune response by virus</keyword>
<keyword id="KW-1100">Inhibition of host NF-kappa-B by virus</keyword>
<keyword id="KW-1113">Inhibition of host RLR pathway by virus</keyword>
<keyword id="KW-1110">Inhibition of host TRAFs by virus</keyword>
<keyword id="KW-1185">Reference proteome</keyword>
<keyword id="KW-0899">Viral immunoevasion</keyword>
<organism>
    <name type="scientific">Vaccinia virus (strain Copenhagen)</name>
    <name type="common">VACV</name>
    <dbReference type="NCBI Taxonomy" id="10249"/>
    <lineage>
        <taxon>Viruses</taxon>
        <taxon>Varidnaviria</taxon>
        <taxon>Bamfordvirae</taxon>
        <taxon>Nucleocytoviricota</taxon>
        <taxon>Pokkesviricetes</taxon>
        <taxon>Chitovirales</taxon>
        <taxon>Poxviridae</taxon>
        <taxon>Chordopoxvirinae</taxon>
        <taxon>Orthopoxvirus</taxon>
        <taxon>Vaccinia virus</taxon>
    </lineage>
</organism>
<sequence>MDIKIDISISGDKFTVTTRRENEERKKYLPLQKEKTTDVIKPDYLEYDDLLDRDEMSTILEEYFMYRGLLGLRIKYGRLFNEIKKFDNDAEEQFGTIEELKQKLRLNSEEGADNFIDYIKVQKQDIVKLTVYDCISMIGLCACVVDVWRNEKLFSRWKYCLRAIKLFINDHMLDKIKSILQNRLVYVEMS</sequence>
<protein>
    <recommendedName>
        <fullName>Protein A52</fullName>
    </recommendedName>
</protein>
<accession>P21070</accession>
<proteinExistence type="inferred from homology"/>
<dbReference type="EMBL" id="M35027">
    <property type="protein sequence ID" value="AAA48186.1"/>
    <property type="molecule type" value="Genomic_DNA"/>
</dbReference>
<dbReference type="PIR" id="I42522">
    <property type="entry name" value="I42522"/>
</dbReference>
<dbReference type="SMR" id="P21070"/>
<dbReference type="Proteomes" id="UP000008269">
    <property type="component" value="Segment"/>
</dbReference>
<dbReference type="GO" id="GO:0052170">
    <property type="term" value="P:symbiont-mediated suppression of host innate immune response"/>
    <property type="evidence" value="ECO:0007669"/>
    <property type="project" value="UniProtKB-KW"/>
</dbReference>
<dbReference type="GO" id="GO:0085034">
    <property type="term" value="P:symbiont-mediated suppression of host NF-kappaB cascade"/>
    <property type="evidence" value="ECO:0007669"/>
    <property type="project" value="UniProtKB-KW"/>
</dbReference>
<dbReference type="GO" id="GO:0039527">
    <property type="term" value="P:symbiont-mediated suppression of host TRAF-mediated signal transduction"/>
    <property type="evidence" value="ECO:0007669"/>
    <property type="project" value="UniProtKB-KW"/>
</dbReference>
<dbReference type="Gene3D" id="1.10.437.20">
    <property type="entry name" value="dsDNA poxvirus"/>
    <property type="match status" value="1"/>
</dbReference>
<dbReference type="InterPro" id="IPR022819">
    <property type="entry name" value="Poxvirus_Bcl-2-like"/>
</dbReference>
<dbReference type="InterPro" id="IPR043018">
    <property type="entry name" value="Poxvirus_sf"/>
</dbReference>
<dbReference type="Pfam" id="PF06227">
    <property type="entry name" value="Poxv_Bcl-2-like"/>
    <property type="match status" value="1"/>
</dbReference>